<accession>A6NEL2</accession>
<accession>B2RP29</accession>
<gene>
    <name type="primary">SOWAHB</name>
    <name type="synonym">ANKRD56</name>
</gene>
<protein>
    <recommendedName>
        <fullName>Ankyrin repeat domain-containing protein SOWAHB</fullName>
    </recommendedName>
    <alternativeName>
        <fullName>Ankyrin repeat domain-containing protein 56</fullName>
    </alternativeName>
    <alternativeName>
        <fullName>Protein sosondowah homolog B</fullName>
    </alternativeName>
</protein>
<reference key="1">
    <citation type="journal article" date="2005" name="Nature">
        <title>Generation and annotation of the DNA sequences of human chromosomes 2 and 4.</title>
        <authorList>
            <person name="Hillier L.W."/>
            <person name="Graves T.A."/>
            <person name="Fulton R.S."/>
            <person name="Fulton L.A."/>
            <person name="Pepin K.H."/>
            <person name="Minx P."/>
            <person name="Wagner-McPherson C."/>
            <person name="Layman D."/>
            <person name="Wylie K."/>
            <person name="Sekhon M."/>
            <person name="Becker M.C."/>
            <person name="Fewell G.A."/>
            <person name="Delehaunty K.D."/>
            <person name="Miner T.L."/>
            <person name="Nash W.E."/>
            <person name="Kremitzki C."/>
            <person name="Oddy L."/>
            <person name="Du H."/>
            <person name="Sun H."/>
            <person name="Bradshaw-Cordum H."/>
            <person name="Ali J."/>
            <person name="Carter J."/>
            <person name="Cordes M."/>
            <person name="Harris A."/>
            <person name="Isak A."/>
            <person name="van Brunt A."/>
            <person name="Nguyen C."/>
            <person name="Du F."/>
            <person name="Courtney L."/>
            <person name="Kalicki J."/>
            <person name="Ozersky P."/>
            <person name="Abbott S."/>
            <person name="Armstrong J."/>
            <person name="Belter E.A."/>
            <person name="Caruso L."/>
            <person name="Cedroni M."/>
            <person name="Cotton M."/>
            <person name="Davidson T."/>
            <person name="Desai A."/>
            <person name="Elliott G."/>
            <person name="Erb T."/>
            <person name="Fronick C."/>
            <person name="Gaige T."/>
            <person name="Haakenson W."/>
            <person name="Haglund K."/>
            <person name="Holmes A."/>
            <person name="Harkins R."/>
            <person name="Kim K."/>
            <person name="Kruchowski S.S."/>
            <person name="Strong C.M."/>
            <person name="Grewal N."/>
            <person name="Goyea E."/>
            <person name="Hou S."/>
            <person name="Levy A."/>
            <person name="Martinka S."/>
            <person name="Mead K."/>
            <person name="McLellan M.D."/>
            <person name="Meyer R."/>
            <person name="Randall-Maher J."/>
            <person name="Tomlinson C."/>
            <person name="Dauphin-Kohlberg S."/>
            <person name="Kozlowicz-Reilly A."/>
            <person name="Shah N."/>
            <person name="Swearengen-Shahid S."/>
            <person name="Snider J."/>
            <person name="Strong J.T."/>
            <person name="Thompson J."/>
            <person name="Yoakum M."/>
            <person name="Leonard S."/>
            <person name="Pearman C."/>
            <person name="Trani L."/>
            <person name="Radionenko M."/>
            <person name="Waligorski J.E."/>
            <person name="Wang C."/>
            <person name="Rock S.M."/>
            <person name="Tin-Wollam A.-M."/>
            <person name="Maupin R."/>
            <person name="Latreille P."/>
            <person name="Wendl M.C."/>
            <person name="Yang S.-P."/>
            <person name="Pohl C."/>
            <person name="Wallis J.W."/>
            <person name="Spieth J."/>
            <person name="Bieri T.A."/>
            <person name="Berkowicz N."/>
            <person name="Nelson J.O."/>
            <person name="Osborne J."/>
            <person name="Ding L."/>
            <person name="Meyer R."/>
            <person name="Sabo A."/>
            <person name="Shotland Y."/>
            <person name="Sinha P."/>
            <person name="Wohldmann P.E."/>
            <person name="Cook L.L."/>
            <person name="Hickenbotham M.T."/>
            <person name="Eldred J."/>
            <person name="Williams D."/>
            <person name="Jones T.A."/>
            <person name="She X."/>
            <person name="Ciccarelli F.D."/>
            <person name="Izaurralde E."/>
            <person name="Taylor J."/>
            <person name="Schmutz J."/>
            <person name="Myers R.M."/>
            <person name="Cox D.R."/>
            <person name="Huang X."/>
            <person name="McPherson J.D."/>
            <person name="Mardis E.R."/>
            <person name="Clifton S.W."/>
            <person name="Warren W.C."/>
            <person name="Chinwalla A.T."/>
            <person name="Eddy S.R."/>
            <person name="Marra M.A."/>
            <person name="Ovcharenko I."/>
            <person name="Furey T.S."/>
            <person name="Miller W."/>
            <person name="Eichler E.E."/>
            <person name="Bork P."/>
            <person name="Suyama M."/>
            <person name="Torrents D."/>
            <person name="Waterston R.H."/>
            <person name="Wilson R.K."/>
        </authorList>
    </citation>
    <scope>NUCLEOTIDE SEQUENCE [LARGE SCALE GENOMIC DNA]</scope>
</reference>
<reference key="2">
    <citation type="journal article" date="2004" name="Genome Res.">
        <title>The status, quality, and expansion of the NIH full-length cDNA project: the Mammalian Gene Collection (MGC).</title>
        <authorList>
            <consortium name="The MGC Project Team"/>
        </authorList>
    </citation>
    <scope>NUCLEOTIDE SEQUENCE [LARGE SCALE MRNA]</scope>
</reference>
<reference key="3">
    <citation type="journal article" date="2014" name="J. Proteomics">
        <title>An enzyme assisted RP-RPLC approach for in-depth analysis of human liver phosphoproteome.</title>
        <authorList>
            <person name="Bian Y."/>
            <person name="Song C."/>
            <person name="Cheng K."/>
            <person name="Dong M."/>
            <person name="Wang F."/>
            <person name="Huang J."/>
            <person name="Sun D."/>
            <person name="Wang L."/>
            <person name="Ye M."/>
            <person name="Zou H."/>
        </authorList>
    </citation>
    <scope>PHOSPHORYLATION [LARGE SCALE ANALYSIS] AT SER-106 AND SER-271</scope>
    <scope>IDENTIFICATION BY MASS SPECTROMETRY [LARGE SCALE ANALYSIS]</scope>
    <source>
        <tissue>Liver</tissue>
    </source>
</reference>
<organism>
    <name type="scientific">Homo sapiens</name>
    <name type="common">Human</name>
    <dbReference type="NCBI Taxonomy" id="9606"/>
    <lineage>
        <taxon>Eukaryota</taxon>
        <taxon>Metazoa</taxon>
        <taxon>Chordata</taxon>
        <taxon>Craniata</taxon>
        <taxon>Vertebrata</taxon>
        <taxon>Euteleostomi</taxon>
        <taxon>Mammalia</taxon>
        <taxon>Eutheria</taxon>
        <taxon>Euarchontoglires</taxon>
        <taxon>Primates</taxon>
        <taxon>Haplorrhini</taxon>
        <taxon>Catarrhini</taxon>
        <taxon>Hominidae</taxon>
        <taxon>Homo</taxon>
    </lineage>
</organism>
<evidence type="ECO:0000250" key="1">
    <source>
        <dbReference type="UniProtKB" id="Q8BZW2"/>
    </source>
</evidence>
<evidence type="ECO:0000256" key="2">
    <source>
        <dbReference type="SAM" id="MobiDB-lite"/>
    </source>
</evidence>
<evidence type="ECO:0000305" key="3"/>
<evidence type="ECO:0007744" key="4">
    <source>
    </source>
</evidence>
<comment type="interaction">
    <interactant intactId="EBI-23696033">
        <id>A6NEL2</id>
    </interactant>
    <interactant intactId="EBI-489887">
        <id>P50402</id>
        <label>EMD</label>
    </interactant>
    <organismsDiffer>false</organismsDiffer>
    <experiments>3</experiments>
</comment>
<comment type="similarity">
    <text evidence="3">Belongs to the SOWAH family.</text>
</comment>
<sequence length="793" mass="85742">MARELSQEALLDFLCQAGGRVTNAALLSHFKSFLRDPDASPSQHQHRRELFKGFVNSVAAVRQDPDGTKYVVLKRRYRDLLGEEGLQRPREPPAAAPSAGGAAPCSPRGARRGEPPQQQPRRRRREKEPEEEPAGAAARAADAACNGLPGSDSRRAPGKGGGSKGSPGQRPPVPAAAAAGAQARASCAAAKTQGRCCWECLQNNLAVLPGELGALPHSATAEEKPARALPAQDDRGASREREEGALAEPAPVPAVAHSPPATVEAATSRASPPALLPGPAPRGDRPELLTPSSLHYSTLQQQQQRTREWVARHPQVPEARDQGPIRAWSVLPDNFLQLPLEPGSTEPNSEPPDPCLSSHSLFPVVPDESWESWAGNPSLTVFRSIRCQLSLQDLDDFVDQESDGSEESSSGPKDSPGASEEGLQVVLGTPDRGKLRNPAGGLSVSRKEGSPSRSPQGLRNRGDGHISQQVPAGANGLAGHPLKPLPWPVPKLRRSLRRSSLAGRAKLSSSDEEYLDEGLLKRSRRPPRSRKPSKAGTAPSPRVDAGLSLKLAEVKAVVAERGWRHSLWVPSGEGSAALAPHRTSEHKSSLVPLDAREHEWIVKLASGSWIQVWTLFWEDPQLALHKDFLTGYTALHWIAKHGDLRALQDLVSGAKKAGIVLDVNVRSSCGYTPLHLAAIHGHQGVIKLLVQRLASRVNVRDSSGKKPWQYLTSNTSGEIWQLLGAPRGKPIFPVYPLVGSSSPTRKAKSKEISRSVTRKTSFAALLKSQHNKWKLANQYEKFHSPREREEYSD</sequence>
<dbReference type="EMBL" id="AC104687">
    <property type="status" value="NOT_ANNOTATED_CDS"/>
    <property type="molecule type" value="Genomic_DNA"/>
</dbReference>
<dbReference type="EMBL" id="BC137241">
    <property type="protein sequence ID" value="AAI37242.1"/>
    <property type="molecule type" value="mRNA"/>
</dbReference>
<dbReference type="EMBL" id="BC137255">
    <property type="protein sequence ID" value="AAI37256.1"/>
    <property type="molecule type" value="mRNA"/>
</dbReference>
<dbReference type="CCDS" id="CCDS34017.1"/>
<dbReference type="RefSeq" id="NP_001025041.1">
    <property type="nucleotide sequence ID" value="NM_001029870.3"/>
</dbReference>
<dbReference type="SMR" id="A6NEL2"/>
<dbReference type="BioGRID" id="131341">
    <property type="interactions" value="40"/>
</dbReference>
<dbReference type="FunCoup" id="A6NEL2">
    <property type="interactions" value="6"/>
</dbReference>
<dbReference type="IntAct" id="A6NEL2">
    <property type="interactions" value="9"/>
</dbReference>
<dbReference type="STRING" id="9606.ENSP00000334879"/>
<dbReference type="GlyCosmos" id="A6NEL2">
    <property type="glycosylation" value="3 sites, 1 glycan"/>
</dbReference>
<dbReference type="GlyGen" id="A6NEL2">
    <property type="glycosylation" value="3 sites, 1 O-linked glycan (3 sites)"/>
</dbReference>
<dbReference type="iPTMnet" id="A6NEL2"/>
<dbReference type="PhosphoSitePlus" id="A6NEL2"/>
<dbReference type="BioMuta" id="SOWAHB"/>
<dbReference type="jPOST" id="A6NEL2"/>
<dbReference type="MassIVE" id="A6NEL2"/>
<dbReference type="PaxDb" id="9606-ENSP00000334879"/>
<dbReference type="PeptideAtlas" id="A6NEL2"/>
<dbReference type="ProteomicsDB" id="989"/>
<dbReference type="Antibodypedia" id="50696">
    <property type="antibodies" value="76 antibodies from 15 providers"/>
</dbReference>
<dbReference type="DNASU" id="345079"/>
<dbReference type="Ensembl" id="ENST00000334306.4">
    <property type="protein sequence ID" value="ENSP00000334879.2"/>
    <property type="gene ID" value="ENSG00000186212.4"/>
</dbReference>
<dbReference type="GeneID" id="345079"/>
<dbReference type="KEGG" id="hsa:345079"/>
<dbReference type="MANE-Select" id="ENST00000334306.4">
    <property type="protein sequence ID" value="ENSP00000334879.2"/>
    <property type="RefSeq nucleotide sequence ID" value="NM_001029870.3"/>
    <property type="RefSeq protein sequence ID" value="NP_001025041.1"/>
</dbReference>
<dbReference type="UCSC" id="uc003hki.4">
    <property type="organism name" value="human"/>
</dbReference>
<dbReference type="AGR" id="HGNC:32958"/>
<dbReference type="CTD" id="345079"/>
<dbReference type="DisGeNET" id="345079"/>
<dbReference type="GeneCards" id="SOWAHB"/>
<dbReference type="HGNC" id="HGNC:32958">
    <property type="gene designation" value="SOWAHB"/>
</dbReference>
<dbReference type="HPA" id="ENSG00000186212">
    <property type="expression patterns" value="Tissue enhanced (liver)"/>
</dbReference>
<dbReference type="neXtProt" id="NX_A6NEL2"/>
<dbReference type="OpenTargets" id="ENSG00000186212"/>
<dbReference type="PharmGKB" id="PA145149864"/>
<dbReference type="VEuPathDB" id="HostDB:ENSG00000186212"/>
<dbReference type="eggNOG" id="ENOG502QRSJ">
    <property type="taxonomic scope" value="Eukaryota"/>
</dbReference>
<dbReference type="GeneTree" id="ENSGT00950000183003"/>
<dbReference type="HOGENOM" id="CLU_020213_0_0_1"/>
<dbReference type="InParanoid" id="A6NEL2"/>
<dbReference type="OMA" id="WECLQNG"/>
<dbReference type="OrthoDB" id="60433at2759"/>
<dbReference type="PAN-GO" id="A6NEL2">
    <property type="GO annotations" value="0 GO annotations based on evolutionary models"/>
</dbReference>
<dbReference type="PhylomeDB" id="A6NEL2"/>
<dbReference type="TreeFam" id="TF331362"/>
<dbReference type="PathwayCommons" id="A6NEL2"/>
<dbReference type="SignaLink" id="A6NEL2"/>
<dbReference type="BioGRID-ORCS" id="345079">
    <property type="hits" value="16 hits in 1148 CRISPR screens"/>
</dbReference>
<dbReference type="GenomeRNAi" id="345079"/>
<dbReference type="Pharos" id="A6NEL2">
    <property type="development level" value="Tdark"/>
</dbReference>
<dbReference type="PRO" id="PR:A6NEL2"/>
<dbReference type="Proteomes" id="UP000005640">
    <property type="component" value="Chromosome 4"/>
</dbReference>
<dbReference type="RNAct" id="A6NEL2">
    <property type="molecule type" value="protein"/>
</dbReference>
<dbReference type="Bgee" id="ENSG00000186212">
    <property type="expression patterns" value="Expressed in mucosa of transverse colon and 83 other cell types or tissues"/>
</dbReference>
<dbReference type="Gene3D" id="1.25.40.20">
    <property type="entry name" value="Ankyrin repeat-containing domain"/>
    <property type="match status" value="1"/>
</dbReference>
<dbReference type="InterPro" id="IPR002110">
    <property type="entry name" value="Ankyrin_rpt"/>
</dbReference>
<dbReference type="InterPro" id="IPR036770">
    <property type="entry name" value="Ankyrin_rpt-contain_sf"/>
</dbReference>
<dbReference type="PANTHER" id="PTHR14491:SF3">
    <property type="entry name" value="ANKYRIN REPEAT DOMAIN-CONTAINING PROTEIN SOWAHB"/>
    <property type="match status" value="1"/>
</dbReference>
<dbReference type="PANTHER" id="PTHR14491">
    <property type="entry name" value="SOSONDOWAH, ISOFORM G"/>
    <property type="match status" value="1"/>
</dbReference>
<dbReference type="Pfam" id="PF12796">
    <property type="entry name" value="Ank_2"/>
    <property type="match status" value="1"/>
</dbReference>
<dbReference type="SMART" id="SM00248">
    <property type="entry name" value="ANK"/>
    <property type="match status" value="2"/>
</dbReference>
<dbReference type="SUPFAM" id="SSF48403">
    <property type="entry name" value="Ankyrin repeat"/>
    <property type="match status" value="1"/>
</dbReference>
<dbReference type="PROSITE" id="PS50297">
    <property type="entry name" value="ANK_REP_REGION"/>
    <property type="match status" value="1"/>
</dbReference>
<dbReference type="PROSITE" id="PS50088">
    <property type="entry name" value="ANK_REPEAT"/>
    <property type="match status" value="1"/>
</dbReference>
<feature type="chain" id="PRO_0000317240" description="Ankyrin repeat domain-containing protein SOWAHB">
    <location>
        <begin position="1"/>
        <end position="793"/>
    </location>
</feature>
<feature type="repeat" description="ANK 1">
    <location>
        <begin position="630"/>
        <end position="659"/>
    </location>
</feature>
<feature type="repeat" description="ANK 2">
    <location>
        <begin position="669"/>
        <end position="699"/>
    </location>
</feature>
<feature type="region of interest" description="Disordered" evidence="2">
    <location>
        <begin position="83"/>
        <end position="185"/>
    </location>
</feature>
<feature type="region of interest" description="Disordered" evidence="2">
    <location>
        <begin position="219"/>
        <end position="290"/>
    </location>
</feature>
<feature type="region of interest" description="Disordered" evidence="2">
    <location>
        <begin position="337"/>
        <end position="360"/>
    </location>
</feature>
<feature type="region of interest" description="Disordered" evidence="2">
    <location>
        <begin position="396"/>
        <end position="543"/>
    </location>
</feature>
<feature type="compositionally biased region" description="Low complexity" evidence="2">
    <location>
        <begin position="96"/>
        <end position="108"/>
    </location>
</feature>
<feature type="compositionally biased region" description="Low complexity" evidence="2">
    <location>
        <begin position="134"/>
        <end position="144"/>
    </location>
</feature>
<feature type="compositionally biased region" description="Low complexity" evidence="2">
    <location>
        <begin position="175"/>
        <end position="185"/>
    </location>
</feature>
<feature type="compositionally biased region" description="Basic and acidic residues" evidence="2">
    <location>
        <begin position="220"/>
        <end position="244"/>
    </location>
</feature>
<feature type="compositionally biased region" description="Low complexity" evidence="2">
    <location>
        <begin position="246"/>
        <end position="273"/>
    </location>
</feature>
<feature type="compositionally biased region" description="Acidic residues" evidence="2">
    <location>
        <begin position="396"/>
        <end position="406"/>
    </location>
</feature>
<feature type="compositionally biased region" description="Low complexity" evidence="2">
    <location>
        <begin position="407"/>
        <end position="417"/>
    </location>
</feature>
<feature type="compositionally biased region" description="Low complexity" evidence="2">
    <location>
        <begin position="498"/>
        <end position="508"/>
    </location>
</feature>
<feature type="compositionally biased region" description="Basic residues" evidence="2">
    <location>
        <begin position="521"/>
        <end position="533"/>
    </location>
</feature>
<feature type="modified residue" description="Phosphoserine" evidence="4">
    <location>
        <position position="106"/>
    </location>
</feature>
<feature type="modified residue" description="Phosphoserine" evidence="4">
    <location>
        <position position="271"/>
    </location>
</feature>
<feature type="modified residue" description="Phosphoserine" evidence="1">
    <location>
        <position position="761"/>
    </location>
</feature>
<feature type="sequence variant" id="VAR_059126" description="In dbSNP:rs2703129.">
    <original>D</original>
    <variation>G</variation>
    <location>
        <position position="152"/>
    </location>
</feature>
<feature type="sequence variant" id="VAR_048280" description="In dbSNP:rs2703130.">
    <original>P</original>
    <variation>T</variation>
    <location>
        <position position="377"/>
    </location>
</feature>
<keyword id="KW-0040">ANK repeat</keyword>
<keyword id="KW-0597">Phosphoprotein</keyword>
<keyword id="KW-1267">Proteomics identification</keyword>
<keyword id="KW-1185">Reference proteome</keyword>
<keyword id="KW-0677">Repeat</keyword>
<name>SWAHB_HUMAN</name>
<proteinExistence type="evidence at protein level"/>